<reference key="1">
    <citation type="journal article" date="2007" name="Proc. Natl. Acad. Sci. U.S.A.">
        <title>Genomic and metabolic adaptations of Methanobrevibacter smithii to the human gut.</title>
        <authorList>
            <person name="Samuel B.S."/>
            <person name="Hansen E.E."/>
            <person name="Manchester J.K."/>
            <person name="Coutinho P.M."/>
            <person name="Henrissat B."/>
            <person name="Fulton R."/>
            <person name="Latreille P."/>
            <person name="Kim K."/>
            <person name="Wilson R.K."/>
            <person name="Gordon J.I."/>
        </authorList>
    </citation>
    <scope>NUCLEOTIDE SEQUENCE [LARGE SCALE GENOMIC DNA]</scope>
    <source>
        <strain>ATCC 35061 / DSM 861 / OCM 144 / PS</strain>
    </source>
</reference>
<dbReference type="EC" id="2.7.4.6" evidence="1"/>
<dbReference type="EMBL" id="CP000678">
    <property type="protein sequence ID" value="ABQ86408.1"/>
    <property type="molecule type" value="Genomic_DNA"/>
</dbReference>
<dbReference type="RefSeq" id="WP_004034886.1">
    <property type="nucleotide sequence ID" value="NZ_CP117965.1"/>
</dbReference>
<dbReference type="SMR" id="A5UJN0"/>
<dbReference type="STRING" id="420247.Msm_0203"/>
<dbReference type="EnsemblBacteria" id="ABQ86408">
    <property type="protein sequence ID" value="ABQ86408"/>
    <property type="gene ID" value="Msm_0203"/>
</dbReference>
<dbReference type="GeneID" id="78816827"/>
<dbReference type="KEGG" id="msi:Msm_0203"/>
<dbReference type="PATRIC" id="fig|420247.28.peg.207"/>
<dbReference type="eggNOG" id="arCOG04313">
    <property type="taxonomic scope" value="Archaea"/>
</dbReference>
<dbReference type="HOGENOM" id="CLU_060216_6_3_2"/>
<dbReference type="Proteomes" id="UP000001992">
    <property type="component" value="Chromosome"/>
</dbReference>
<dbReference type="GO" id="GO:0005737">
    <property type="term" value="C:cytoplasm"/>
    <property type="evidence" value="ECO:0007669"/>
    <property type="project" value="UniProtKB-SubCell"/>
</dbReference>
<dbReference type="GO" id="GO:0005524">
    <property type="term" value="F:ATP binding"/>
    <property type="evidence" value="ECO:0007669"/>
    <property type="project" value="UniProtKB-UniRule"/>
</dbReference>
<dbReference type="GO" id="GO:0046872">
    <property type="term" value="F:metal ion binding"/>
    <property type="evidence" value="ECO:0007669"/>
    <property type="project" value="UniProtKB-KW"/>
</dbReference>
<dbReference type="GO" id="GO:0004550">
    <property type="term" value="F:nucleoside diphosphate kinase activity"/>
    <property type="evidence" value="ECO:0007669"/>
    <property type="project" value="UniProtKB-UniRule"/>
</dbReference>
<dbReference type="GO" id="GO:0006241">
    <property type="term" value="P:CTP biosynthetic process"/>
    <property type="evidence" value="ECO:0007669"/>
    <property type="project" value="UniProtKB-UniRule"/>
</dbReference>
<dbReference type="GO" id="GO:0006183">
    <property type="term" value="P:GTP biosynthetic process"/>
    <property type="evidence" value="ECO:0007669"/>
    <property type="project" value="UniProtKB-UniRule"/>
</dbReference>
<dbReference type="GO" id="GO:0006228">
    <property type="term" value="P:UTP biosynthetic process"/>
    <property type="evidence" value="ECO:0007669"/>
    <property type="project" value="UniProtKB-UniRule"/>
</dbReference>
<dbReference type="CDD" id="cd04413">
    <property type="entry name" value="NDPk_I"/>
    <property type="match status" value="1"/>
</dbReference>
<dbReference type="FunFam" id="3.30.70.141:FF:000003">
    <property type="entry name" value="Nucleoside diphosphate kinase"/>
    <property type="match status" value="1"/>
</dbReference>
<dbReference type="Gene3D" id="3.30.70.141">
    <property type="entry name" value="Nucleoside diphosphate kinase-like domain"/>
    <property type="match status" value="1"/>
</dbReference>
<dbReference type="HAMAP" id="MF_00451">
    <property type="entry name" value="NDP_kinase"/>
    <property type="match status" value="1"/>
</dbReference>
<dbReference type="InterPro" id="IPR034907">
    <property type="entry name" value="NDK-like_dom"/>
</dbReference>
<dbReference type="InterPro" id="IPR036850">
    <property type="entry name" value="NDK-like_dom_sf"/>
</dbReference>
<dbReference type="InterPro" id="IPR001564">
    <property type="entry name" value="Nucleoside_diP_kinase"/>
</dbReference>
<dbReference type="InterPro" id="IPR023005">
    <property type="entry name" value="Nucleoside_diP_kinase_AS"/>
</dbReference>
<dbReference type="NCBIfam" id="NF001908">
    <property type="entry name" value="PRK00668.1"/>
    <property type="match status" value="1"/>
</dbReference>
<dbReference type="PANTHER" id="PTHR11349">
    <property type="entry name" value="NUCLEOSIDE DIPHOSPHATE KINASE"/>
    <property type="match status" value="1"/>
</dbReference>
<dbReference type="Pfam" id="PF00334">
    <property type="entry name" value="NDK"/>
    <property type="match status" value="1"/>
</dbReference>
<dbReference type="PRINTS" id="PR01243">
    <property type="entry name" value="NUCDPKINASE"/>
</dbReference>
<dbReference type="SMART" id="SM00562">
    <property type="entry name" value="NDK"/>
    <property type="match status" value="1"/>
</dbReference>
<dbReference type="SUPFAM" id="SSF54919">
    <property type="entry name" value="Nucleoside diphosphate kinase, NDK"/>
    <property type="match status" value="1"/>
</dbReference>
<dbReference type="PROSITE" id="PS00469">
    <property type="entry name" value="NDPK"/>
    <property type="match status" value="1"/>
</dbReference>
<dbReference type="PROSITE" id="PS51374">
    <property type="entry name" value="NDPK_LIKE"/>
    <property type="match status" value="1"/>
</dbReference>
<organism>
    <name type="scientific">Methanobrevibacter smithii (strain ATCC 35061 / DSM 861 / OCM 144 / PS)</name>
    <dbReference type="NCBI Taxonomy" id="420247"/>
    <lineage>
        <taxon>Archaea</taxon>
        <taxon>Methanobacteriati</taxon>
        <taxon>Methanobacteriota</taxon>
        <taxon>Methanomada group</taxon>
        <taxon>Methanobacteria</taxon>
        <taxon>Methanobacteriales</taxon>
        <taxon>Methanobacteriaceae</taxon>
        <taxon>Methanobrevibacter</taxon>
    </lineage>
</organism>
<accession>A5UJN0</accession>
<name>NDK_METS3</name>
<gene>
    <name evidence="1" type="primary">ndk</name>
    <name type="ordered locus">Msm_0203</name>
</gene>
<protein>
    <recommendedName>
        <fullName evidence="1">Nucleoside diphosphate kinase</fullName>
        <shortName evidence="1">NDK</shortName>
        <shortName evidence="1">NDP kinase</shortName>
        <ecNumber evidence="1">2.7.4.6</ecNumber>
    </recommendedName>
    <alternativeName>
        <fullName evidence="1">Nucleoside-2-P kinase</fullName>
    </alternativeName>
</protein>
<evidence type="ECO:0000255" key="1">
    <source>
        <dbReference type="HAMAP-Rule" id="MF_00451"/>
    </source>
</evidence>
<feature type="chain" id="PRO_1000026253" description="Nucleoside diphosphate kinase">
    <location>
        <begin position="1"/>
        <end position="150"/>
    </location>
</feature>
<feature type="active site" description="Pros-phosphohistidine intermediate" evidence="1">
    <location>
        <position position="116"/>
    </location>
</feature>
<feature type="binding site" evidence="1">
    <location>
        <position position="10"/>
    </location>
    <ligand>
        <name>ATP</name>
        <dbReference type="ChEBI" id="CHEBI:30616"/>
    </ligand>
</feature>
<feature type="binding site" evidence="1">
    <location>
        <position position="58"/>
    </location>
    <ligand>
        <name>ATP</name>
        <dbReference type="ChEBI" id="CHEBI:30616"/>
    </ligand>
</feature>
<feature type="binding site" evidence="1">
    <location>
        <position position="86"/>
    </location>
    <ligand>
        <name>ATP</name>
        <dbReference type="ChEBI" id="CHEBI:30616"/>
    </ligand>
</feature>
<feature type="binding site" evidence="1">
    <location>
        <position position="92"/>
    </location>
    <ligand>
        <name>ATP</name>
        <dbReference type="ChEBI" id="CHEBI:30616"/>
    </ligand>
</feature>
<feature type="binding site" evidence="1">
    <location>
        <position position="103"/>
    </location>
    <ligand>
        <name>ATP</name>
        <dbReference type="ChEBI" id="CHEBI:30616"/>
    </ligand>
</feature>
<feature type="binding site" evidence="1">
    <location>
        <position position="113"/>
    </location>
    <ligand>
        <name>ATP</name>
        <dbReference type="ChEBI" id="CHEBI:30616"/>
    </ligand>
</feature>
<sequence length="150" mass="16902">MIQKSFVMMKPDAVQRRLMGKILSRFEEKGLQIVAVKLMQIDEDLAKTHYGEHADKPFFGSLIEYITSSPSLAMVIEGEEAISTIRKLVGATNPLEADLGTIRGDFAMDTGRNIIHASDSPDSAEREINLFFNEDEICDYEIVDNKLIYE</sequence>
<keyword id="KW-0067">ATP-binding</keyword>
<keyword id="KW-0963">Cytoplasm</keyword>
<keyword id="KW-0418">Kinase</keyword>
<keyword id="KW-0460">Magnesium</keyword>
<keyword id="KW-0479">Metal-binding</keyword>
<keyword id="KW-0546">Nucleotide metabolism</keyword>
<keyword id="KW-0547">Nucleotide-binding</keyword>
<keyword id="KW-0597">Phosphoprotein</keyword>
<keyword id="KW-0808">Transferase</keyword>
<comment type="function">
    <text evidence="1">Major role in the synthesis of nucleoside triphosphates other than ATP. The ATP gamma phosphate is transferred to the NDP beta phosphate via a ping-pong mechanism, using a phosphorylated active-site intermediate.</text>
</comment>
<comment type="catalytic activity">
    <reaction evidence="1">
        <text>a 2'-deoxyribonucleoside 5'-diphosphate + ATP = a 2'-deoxyribonucleoside 5'-triphosphate + ADP</text>
        <dbReference type="Rhea" id="RHEA:44640"/>
        <dbReference type="ChEBI" id="CHEBI:30616"/>
        <dbReference type="ChEBI" id="CHEBI:61560"/>
        <dbReference type="ChEBI" id="CHEBI:73316"/>
        <dbReference type="ChEBI" id="CHEBI:456216"/>
        <dbReference type="EC" id="2.7.4.6"/>
    </reaction>
</comment>
<comment type="catalytic activity">
    <reaction evidence="1">
        <text>a ribonucleoside 5'-diphosphate + ATP = a ribonucleoside 5'-triphosphate + ADP</text>
        <dbReference type="Rhea" id="RHEA:18113"/>
        <dbReference type="ChEBI" id="CHEBI:30616"/>
        <dbReference type="ChEBI" id="CHEBI:57930"/>
        <dbReference type="ChEBI" id="CHEBI:61557"/>
        <dbReference type="ChEBI" id="CHEBI:456216"/>
        <dbReference type="EC" id="2.7.4.6"/>
    </reaction>
</comment>
<comment type="cofactor">
    <cofactor evidence="1">
        <name>Mg(2+)</name>
        <dbReference type="ChEBI" id="CHEBI:18420"/>
    </cofactor>
</comment>
<comment type="subcellular location">
    <subcellularLocation>
        <location evidence="1">Cytoplasm</location>
    </subcellularLocation>
</comment>
<comment type="similarity">
    <text evidence="1">Belongs to the NDK family.</text>
</comment>
<proteinExistence type="inferred from homology"/>